<name>NTPP_BRADU</name>
<comment type="function">
    <text evidence="1">Nucleoside triphosphate pyrophosphatase. May have a dual role in cell division arrest and in preventing the incorporation of modified nucleotides into cellular nucleic acids.</text>
</comment>
<comment type="catalytic activity">
    <reaction evidence="1">
        <text>a ribonucleoside 5'-triphosphate + H2O = a ribonucleoside 5'-phosphate + diphosphate + H(+)</text>
        <dbReference type="Rhea" id="RHEA:23996"/>
        <dbReference type="ChEBI" id="CHEBI:15377"/>
        <dbReference type="ChEBI" id="CHEBI:15378"/>
        <dbReference type="ChEBI" id="CHEBI:33019"/>
        <dbReference type="ChEBI" id="CHEBI:58043"/>
        <dbReference type="ChEBI" id="CHEBI:61557"/>
        <dbReference type="EC" id="3.6.1.9"/>
    </reaction>
</comment>
<comment type="catalytic activity">
    <reaction evidence="1">
        <text>a 2'-deoxyribonucleoside 5'-triphosphate + H2O = a 2'-deoxyribonucleoside 5'-phosphate + diphosphate + H(+)</text>
        <dbReference type="Rhea" id="RHEA:44644"/>
        <dbReference type="ChEBI" id="CHEBI:15377"/>
        <dbReference type="ChEBI" id="CHEBI:15378"/>
        <dbReference type="ChEBI" id="CHEBI:33019"/>
        <dbReference type="ChEBI" id="CHEBI:61560"/>
        <dbReference type="ChEBI" id="CHEBI:65317"/>
        <dbReference type="EC" id="3.6.1.9"/>
    </reaction>
</comment>
<comment type="cofactor">
    <cofactor evidence="1">
        <name>a divalent metal cation</name>
        <dbReference type="ChEBI" id="CHEBI:60240"/>
    </cofactor>
</comment>
<comment type="subcellular location">
    <subcellularLocation>
        <location evidence="1">Cytoplasm</location>
    </subcellularLocation>
</comment>
<comment type="similarity">
    <text evidence="1">Belongs to the Maf family.</text>
</comment>
<sequence>MGLWRGKSPLILASQSSARKMLLANAGLEFIAITADIDERGIQAASKLSSPRDIGLLLAREKAKAVSANHPGSHVIGADQTLALGERLFNKPAGRAQAMAQLRDLAGNYHELNSAVAVAHDGKIVFEDVSVARMTMRQMSEAELSAYLDAAGDAVTTSVGAYQLEGLGIHLFERIEGDHFTILGLPLLPLLAFLRSEQLIAV</sequence>
<feature type="chain" id="PRO_0000122998" description="Nucleoside triphosphate pyrophosphatase">
    <location>
        <begin position="1"/>
        <end position="202"/>
    </location>
</feature>
<feature type="active site" description="Proton acceptor" evidence="1">
    <location>
        <position position="79"/>
    </location>
</feature>
<evidence type="ECO:0000255" key="1">
    <source>
        <dbReference type="HAMAP-Rule" id="MF_00528"/>
    </source>
</evidence>
<accession>Q89WP0</accession>
<proteinExistence type="inferred from homology"/>
<protein>
    <recommendedName>
        <fullName evidence="1">Nucleoside triphosphate pyrophosphatase</fullName>
        <ecNumber evidence="1">3.6.1.9</ecNumber>
    </recommendedName>
    <alternativeName>
        <fullName evidence="1">Nucleotide pyrophosphatase</fullName>
        <shortName evidence="1">Nucleotide PPase</shortName>
    </alternativeName>
</protein>
<gene>
    <name type="ordered locus">blr0638</name>
</gene>
<dbReference type="EC" id="3.6.1.9" evidence="1"/>
<dbReference type="EMBL" id="BA000040">
    <property type="protein sequence ID" value="BAC45903.1"/>
    <property type="molecule type" value="Genomic_DNA"/>
</dbReference>
<dbReference type="RefSeq" id="NP_767278.1">
    <property type="nucleotide sequence ID" value="NC_004463.1"/>
</dbReference>
<dbReference type="RefSeq" id="WP_011083465.1">
    <property type="nucleotide sequence ID" value="NC_004463.1"/>
</dbReference>
<dbReference type="SMR" id="Q89WP0"/>
<dbReference type="FunCoup" id="Q89WP0">
    <property type="interactions" value="149"/>
</dbReference>
<dbReference type="STRING" id="224911.AAV28_00025"/>
<dbReference type="EnsemblBacteria" id="BAC45903">
    <property type="protein sequence ID" value="BAC45903"/>
    <property type="gene ID" value="BAC45903"/>
</dbReference>
<dbReference type="GeneID" id="46487911"/>
<dbReference type="KEGG" id="bja:blr0638"/>
<dbReference type="PATRIC" id="fig|224911.44.peg.7"/>
<dbReference type="eggNOG" id="COG0424">
    <property type="taxonomic scope" value="Bacteria"/>
</dbReference>
<dbReference type="HOGENOM" id="CLU_040416_1_1_5"/>
<dbReference type="InParanoid" id="Q89WP0"/>
<dbReference type="OrthoDB" id="9813962at2"/>
<dbReference type="PhylomeDB" id="Q89WP0"/>
<dbReference type="Proteomes" id="UP000002526">
    <property type="component" value="Chromosome"/>
</dbReference>
<dbReference type="GO" id="GO:0005737">
    <property type="term" value="C:cytoplasm"/>
    <property type="evidence" value="ECO:0007669"/>
    <property type="project" value="UniProtKB-SubCell"/>
</dbReference>
<dbReference type="GO" id="GO:0047429">
    <property type="term" value="F:nucleoside triphosphate diphosphatase activity"/>
    <property type="evidence" value="ECO:0000318"/>
    <property type="project" value="GO_Central"/>
</dbReference>
<dbReference type="GO" id="GO:0009117">
    <property type="term" value="P:nucleotide metabolic process"/>
    <property type="evidence" value="ECO:0007669"/>
    <property type="project" value="UniProtKB-KW"/>
</dbReference>
<dbReference type="CDD" id="cd00555">
    <property type="entry name" value="Maf"/>
    <property type="match status" value="1"/>
</dbReference>
<dbReference type="FunFam" id="3.90.950.10:FF:000028">
    <property type="entry name" value="Nucleoside triphosphate pyrophosphatase"/>
    <property type="match status" value="1"/>
</dbReference>
<dbReference type="Gene3D" id="3.90.950.10">
    <property type="match status" value="1"/>
</dbReference>
<dbReference type="HAMAP" id="MF_00528">
    <property type="entry name" value="Maf"/>
    <property type="match status" value="1"/>
</dbReference>
<dbReference type="InterPro" id="IPR029001">
    <property type="entry name" value="ITPase-like_fam"/>
</dbReference>
<dbReference type="InterPro" id="IPR003697">
    <property type="entry name" value="Maf-like"/>
</dbReference>
<dbReference type="NCBIfam" id="TIGR00172">
    <property type="entry name" value="maf"/>
    <property type="match status" value="1"/>
</dbReference>
<dbReference type="PANTHER" id="PTHR43213">
    <property type="entry name" value="BIFUNCTIONAL DTTP/UTP PYROPHOSPHATASE/METHYLTRANSFERASE PROTEIN-RELATED"/>
    <property type="match status" value="1"/>
</dbReference>
<dbReference type="PANTHER" id="PTHR43213:SF5">
    <property type="entry name" value="BIFUNCTIONAL DTTP_UTP PYROPHOSPHATASE_METHYLTRANSFERASE PROTEIN-RELATED"/>
    <property type="match status" value="1"/>
</dbReference>
<dbReference type="Pfam" id="PF02545">
    <property type="entry name" value="Maf"/>
    <property type="match status" value="1"/>
</dbReference>
<dbReference type="PIRSF" id="PIRSF006305">
    <property type="entry name" value="Maf"/>
    <property type="match status" value="1"/>
</dbReference>
<dbReference type="SUPFAM" id="SSF52972">
    <property type="entry name" value="ITPase-like"/>
    <property type="match status" value="1"/>
</dbReference>
<organism>
    <name type="scientific">Bradyrhizobium diazoefficiens (strain JCM 10833 / BCRC 13528 / IAM 13628 / NBRC 14792 / USDA 110)</name>
    <dbReference type="NCBI Taxonomy" id="224911"/>
    <lineage>
        <taxon>Bacteria</taxon>
        <taxon>Pseudomonadati</taxon>
        <taxon>Pseudomonadota</taxon>
        <taxon>Alphaproteobacteria</taxon>
        <taxon>Hyphomicrobiales</taxon>
        <taxon>Nitrobacteraceae</taxon>
        <taxon>Bradyrhizobium</taxon>
    </lineage>
</organism>
<keyword id="KW-0963">Cytoplasm</keyword>
<keyword id="KW-0378">Hydrolase</keyword>
<keyword id="KW-0546">Nucleotide metabolism</keyword>
<keyword id="KW-1185">Reference proteome</keyword>
<reference key="1">
    <citation type="journal article" date="2002" name="DNA Res.">
        <title>Complete genomic sequence of nitrogen-fixing symbiotic bacterium Bradyrhizobium japonicum USDA110.</title>
        <authorList>
            <person name="Kaneko T."/>
            <person name="Nakamura Y."/>
            <person name="Sato S."/>
            <person name="Minamisawa K."/>
            <person name="Uchiumi T."/>
            <person name="Sasamoto S."/>
            <person name="Watanabe A."/>
            <person name="Idesawa K."/>
            <person name="Iriguchi M."/>
            <person name="Kawashima K."/>
            <person name="Kohara M."/>
            <person name="Matsumoto M."/>
            <person name="Shimpo S."/>
            <person name="Tsuruoka H."/>
            <person name="Wada T."/>
            <person name="Yamada M."/>
            <person name="Tabata S."/>
        </authorList>
    </citation>
    <scope>NUCLEOTIDE SEQUENCE [LARGE SCALE GENOMIC DNA]</scope>
    <source>
        <strain>JCM 10833 / BCRC 13528 / IAM 13628 / NBRC 14792 / USDA 110</strain>
    </source>
</reference>